<reference key="1">
    <citation type="journal article" date="1990" name="Arch. Microbiol.">
        <title>Structure and mutation of a gene encoding a Mr 33,000 phycocyanin-associated linker polypeptide.</title>
        <authorList>
            <person name="de Lorimier R."/>
            <person name="Guglielmi G."/>
            <person name="Bryant D.A."/>
            <person name="Stevens S.E. Jr."/>
        </authorList>
    </citation>
    <scope>NUCLEOTIDE SEQUENCE [GENOMIC DNA]</scope>
</reference>
<reference key="2">
    <citation type="submission" date="2008-02" db="EMBL/GenBank/DDBJ databases">
        <title>Complete sequence of Synechococcus sp. PCC 7002.</title>
        <authorList>
            <person name="Li T."/>
            <person name="Zhao J."/>
            <person name="Zhao C."/>
            <person name="Liu Z."/>
            <person name="Zhao F."/>
            <person name="Marquardt J."/>
            <person name="Nomura C.T."/>
            <person name="Persson S."/>
            <person name="Detter J.C."/>
            <person name="Richardson P.M."/>
            <person name="Lanz C."/>
            <person name="Schuster S.C."/>
            <person name="Wang J."/>
            <person name="Li S."/>
            <person name="Huang X."/>
            <person name="Cai T."/>
            <person name="Yu Z."/>
            <person name="Luo J."/>
            <person name="Zhao J."/>
            <person name="Bryant D.A."/>
        </authorList>
    </citation>
    <scope>NUCLEOTIDE SEQUENCE [LARGE SCALE GENOMIC DNA]</scope>
    <source>
        <strain>ATCC 27264 / PCC 7002 / PR-6</strain>
    </source>
</reference>
<reference key="3">
    <citation type="journal article" date="1990" name="Arch. Microbiol.">
        <title>Structural and compositional analyses of the phycobilisomes of Synechococcus sp. PCC 7002. Analyses of the wild-type strain and a phycocyanin-less mutant constructed by interposon mutagenesis.</title>
        <authorList>
            <person name="Bryant D.A."/>
            <person name="de Lorimier R."/>
            <person name="Guglielmi G."/>
            <person name="Stevens S.E. Jr."/>
        </authorList>
    </citation>
    <scope>PROTEIN SEQUENCE OF 1-20</scope>
</reference>
<organism>
    <name type="scientific">Picosynechococcus sp. (strain ATCC 27264 / PCC 7002 / PR-6)</name>
    <name type="common">Agmenellum quadruplicatum</name>
    <dbReference type="NCBI Taxonomy" id="32049"/>
    <lineage>
        <taxon>Bacteria</taxon>
        <taxon>Bacillati</taxon>
        <taxon>Cyanobacteriota</taxon>
        <taxon>Cyanophyceae</taxon>
        <taxon>Oscillatoriophycideae</taxon>
        <taxon>Chroococcales</taxon>
        <taxon>Geminocystaceae</taxon>
        <taxon>Picosynechococcus</taxon>
    </lineage>
</organism>
<name>PYR1_PICP2</name>
<sequence>MPVTVAASRLGTAAFDQSPVELRANYSRDDAQTVIRAVYRQVLGNDYVMSSERLTAAESLFTNGFISVRDFVRAVAQSELYKEKFLYNNFQTRVIELNFKHLLGRAPYDEAEVIEHLDRYQNEGFEADINSYIDSAEYTENFGDNIVPYIRSYVVQTGHRTVGFTRMFSLQRGYANSDRAQIAGNASRLAQELARNTTSAVVGPSGVNEGWAFRSAADDYHPGQSLGGSTGLSADDQVVRVEVAALSTPRYPRIRRSSRVFFVPVSRLSQKLQEIQRMGGRVASISPAGQ</sequence>
<gene>
    <name type="primary">cpcC</name>
    <name type="ordered locus">SYNPCC7002_A2211</name>
</gene>
<proteinExistence type="evidence at protein level"/>
<accession>Q05237</accession>
<accession>B1XIU0</accession>
<dbReference type="EMBL" id="X81868">
    <property type="protein sequence ID" value="CAA57457.1"/>
    <property type="molecule type" value="mRNA"/>
</dbReference>
<dbReference type="EMBL" id="CP000951">
    <property type="protein sequence ID" value="ACB00192.1"/>
    <property type="molecule type" value="Genomic_DNA"/>
</dbReference>
<dbReference type="PIR" id="B60662">
    <property type="entry name" value="B60662"/>
</dbReference>
<dbReference type="RefSeq" id="WP_012307810.1">
    <property type="nucleotide sequence ID" value="NZ_JAHHPU010000006.1"/>
</dbReference>
<dbReference type="PDB" id="7EXT">
    <property type="method" value="EM"/>
    <property type="resolution" value="3.50 A"/>
    <property type="chains" value="N1/N2/N4/N5/N6/N8/a1/a2/a4/a5/a6/a8=1-290"/>
</dbReference>
<dbReference type="PDBsum" id="7EXT"/>
<dbReference type="EMDB" id="EMD-31373"/>
<dbReference type="SMR" id="Q05237"/>
<dbReference type="STRING" id="32049.SYNPCC7002_A2211"/>
<dbReference type="KEGG" id="syp:SYNPCC7002_A2211"/>
<dbReference type="eggNOG" id="COG0237">
    <property type="taxonomic scope" value="Bacteria"/>
</dbReference>
<dbReference type="HOGENOM" id="CLU_075505_0_0_3"/>
<dbReference type="Proteomes" id="UP000001688">
    <property type="component" value="Chromosome"/>
</dbReference>
<dbReference type="GO" id="GO:0030089">
    <property type="term" value="C:phycobilisome"/>
    <property type="evidence" value="ECO:0007669"/>
    <property type="project" value="UniProtKB-KW"/>
</dbReference>
<dbReference type="GO" id="GO:0031676">
    <property type="term" value="C:plasma membrane-derived thylakoid membrane"/>
    <property type="evidence" value="ECO:0007669"/>
    <property type="project" value="UniProtKB-SubCell"/>
</dbReference>
<dbReference type="GO" id="GO:0015979">
    <property type="term" value="P:photosynthesis"/>
    <property type="evidence" value="ECO:0007669"/>
    <property type="project" value="UniProtKB-KW"/>
</dbReference>
<dbReference type="Gene3D" id="1.10.3130.20">
    <property type="entry name" value="Phycobilisome linker domain"/>
    <property type="match status" value="1"/>
</dbReference>
<dbReference type="InterPro" id="IPR008213">
    <property type="entry name" value="CpcD-like_dom"/>
</dbReference>
<dbReference type="InterPro" id="IPR001297">
    <property type="entry name" value="PBS_linker_dom"/>
</dbReference>
<dbReference type="InterPro" id="IPR038255">
    <property type="entry name" value="PBS_linker_sf"/>
</dbReference>
<dbReference type="InterPro" id="IPR016470">
    <property type="entry name" value="Phycobilisome"/>
</dbReference>
<dbReference type="PANTHER" id="PTHR34011:SF6">
    <property type="entry name" value="PHYCOBILIPROTEIN APCE"/>
    <property type="match status" value="1"/>
</dbReference>
<dbReference type="PANTHER" id="PTHR34011">
    <property type="entry name" value="PHYCOBILISOME 32.1 KDA LINKER POLYPEPTIDE, PHYCOCYANIN-ASSOCIATED, ROD 2-RELATED"/>
    <property type="match status" value="1"/>
</dbReference>
<dbReference type="Pfam" id="PF01383">
    <property type="entry name" value="CpcD"/>
    <property type="match status" value="1"/>
</dbReference>
<dbReference type="Pfam" id="PF00427">
    <property type="entry name" value="PBS_linker_poly"/>
    <property type="match status" value="1"/>
</dbReference>
<dbReference type="PIRSF" id="PIRSF005898">
    <property type="entry name" value="Phycobilisome_CpeC/CpcI"/>
    <property type="match status" value="1"/>
</dbReference>
<dbReference type="SMART" id="SM01094">
    <property type="entry name" value="CpcD"/>
    <property type="match status" value="1"/>
</dbReference>
<dbReference type="PROSITE" id="PS51441">
    <property type="entry name" value="CPCD_LIKE"/>
    <property type="match status" value="1"/>
</dbReference>
<dbReference type="PROSITE" id="PS51445">
    <property type="entry name" value="PBS_LINKER"/>
    <property type="match status" value="1"/>
</dbReference>
<comment type="function">
    <text>Rod linker protein, associated with phycocyanin. Linker polypeptides determine the state of aggregation and the location of the disk-shaped phycobiliprotein units within the phycobilisome and modulate their spectroscopic properties in order to mediate a directed and optimal energy transfer.</text>
</comment>
<comment type="subcellular location">
    <subcellularLocation>
        <location>Cellular thylakoid membrane</location>
        <topology>Peripheral membrane protein</topology>
        <orientation>Cytoplasmic side</orientation>
    </subcellularLocation>
    <text>This protein occurs in the rod, it is associated with phycocyanin.</text>
</comment>
<comment type="similarity">
    <text evidence="2">Belongs to the phycobilisome linker protein family.</text>
</comment>
<evidence type="ECO:0000255" key="1">
    <source>
        <dbReference type="PROSITE-ProRule" id="PRU00771"/>
    </source>
</evidence>
<evidence type="ECO:0000255" key="2">
    <source>
        <dbReference type="PROSITE-ProRule" id="PRU00775"/>
    </source>
</evidence>
<protein>
    <recommendedName>
        <fullName>Phycobilisome 32.3 kDa linker polypeptide, phycocyanin-associated, rod</fullName>
    </recommendedName>
    <alternativeName>
        <fullName>L-R 32.3</fullName>
    </alternativeName>
</protein>
<keyword id="KW-0002">3D-structure</keyword>
<keyword id="KW-0042">Antenna complex</keyword>
<keyword id="KW-0903">Direct protein sequencing</keyword>
<keyword id="KW-0472">Membrane</keyword>
<keyword id="KW-0602">Photosynthesis</keyword>
<keyword id="KW-0605">Phycobilisome</keyword>
<keyword id="KW-1185">Reference proteome</keyword>
<keyword id="KW-0793">Thylakoid</keyword>
<feature type="chain" id="PRO_0000199222" description="Phycobilisome 32.3 kDa linker polypeptide, phycocyanin-associated, rod">
    <location>
        <begin position="1"/>
        <end position="290"/>
    </location>
</feature>
<feature type="domain" description="PBS-linker" evidence="2">
    <location>
        <begin position="1"/>
        <end position="179"/>
    </location>
</feature>
<feature type="domain" description="CpcD-like" evidence="1">
    <location>
        <begin position="236"/>
        <end position="288"/>
    </location>
</feature>